<keyword id="KW-0963">Cytoplasm</keyword>
<keyword id="KW-0378">Hydrolase</keyword>
<keyword id="KW-0540">Nuclease</keyword>
<keyword id="KW-0690">Ribosome biogenesis</keyword>
<feature type="chain" id="PRO_1000212421" description="Putative pre-16S rRNA nuclease">
    <location>
        <begin position="1"/>
        <end position="139"/>
    </location>
</feature>
<proteinExistence type="inferred from homology"/>
<evidence type="ECO:0000255" key="1">
    <source>
        <dbReference type="HAMAP-Rule" id="MF_00651"/>
    </source>
</evidence>
<organism>
    <name type="scientific">Streptococcus equi subsp. zooepidemicus (strain H70)</name>
    <dbReference type="NCBI Taxonomy" id="553483"/>
    <lineage>
        <taxon>Bacteria</taxon>
        <taxon>Bacillati</taxon>
        <taxon>Bacillota</taxon>
        <taxon>Bacilli</taxon>
        <taxon>Lactobacillales</taxon>
        <taxon>Streptococcaceae</taxon>
        <taxon>Streptococcus</taxon>
    </lineage>
</organism>
<reference key="1">
    <citation type="journal article" date="2009" name="PLoS Pathog.">
        <title>Genomic evidence for the evolution of Streptococcus equi: host restriction, increased virulence, and genetic exchange with human pathogens.</title>
        <authorList>
            <person name="Holden M.T.G."/>
            <person name="Heather Z."/>
            <person name="Paillot R."/>
            <person name="Steward K.F."/>
            <person name="Webb K."/>
            <person name="Ainslie F."/>
            <person name="Jourdan T."/>
            <person name="Bason N.C."/>
            <person name="Holroyd N.E."/>
            <person name="Mungall K."/>
            <person name="Quail M.A."/>
            <person name="Sanders M."/>
            <person name="Simmonds M."/>
            <person name="Willey D."/>
            <person name="Brooks K."/>
            <person name="Aanensen D.M."/>
            <person name="Spratt B.G."/>
            <person name="Jolley K.A."/>
            <person name="Maiden M.C.J."/>
            <person name="Kehoe M."/>
            <person name="Chanter N."/>
            <person name="Bentley S.D."/>
            <person name="Robinson C."/>
            <person name="Maskell D.J."/>
            <person name="Parkhill J."/>
            <person name="Waller A.S."/>
        </authorList>
    </citation>
    <scope>NUCLEOTIDE SEQUENCE [LARGE SCALE GENOMIC DNA]</scope>
    <source>
        <strain>H70</strain>
    </source>
</reference>
<accession>C0MGB3</accession>
<protein>
    <recommendedName>
        <fullName evidence="1">Putative pre-16S rRNA nuclease</fullName>
        <ecNumber evidence="1">3.1.-.-</ecNumber>
    </recommendedName>
</protein>
<dbReference type="EC" id="3.1.-.-" evidence="1"/>
<dbReference type="EMBL" id="FM204884">
    <property type="protein sequence ID" value="CAX00789.1"/>
    <property type="molecule type" value="Genomic_DNA"/>
</dbReference>
<dbReference type="SMR" id="C0MGB3"/>
<dbReference type="KEGG" id="seq:SZO_18610"/>
<dbReference type="eggNOG" id="COG0816">
    <property type="taxonomic scope" value="Bacteria"/>
</dbReference>
<dbReference type="HOGENOM" id="CLU_098240_2_0_9"/>
<dbReference type="Proteomes" id="UP000001368">
    <property type="component" value="Chromosome"/>
</dbReference>
<dbReference type="GO" id="GO:0005829">
    <property type="term" value="C:cytosol"/>
    <property type="evidence" value="ECO:0007669"/>
    <property type="project" value="TreeGrafter"/>
</dbReference>
<dbReference type="GO" id="GO:0004518">
    <property type="term" value="F:nuclease activity"/>
    <property type="evidence" value="ECO:0007669"/>
    <property type="project" value="UniProtKB-KW"/>
</dbReference>
<dbReference type="GO" id="GO:0000967">
    <property type="term" value="P:rRNA 5'-end processing"/>
    <property type="evidence" value="ECO:0007669"/>
    <property type="project" value="UniProtKB-UniRule"/>
</dbReference>
<dbReference type="CDD" id="cd16964">
    <property type="entry name" value="YqgF"/>
    <property type="match status" value="1"/>
</dbReference>
<dbReference type="FunFam" id="3.30.420.140:FF:000003">
    <property type="entry name" value="Putative pre-16S rRNA nuclease"/>
    <property type="match status" value="1"/>
</dbReference>
<dbReference type="Gene3D" id="3.30.420.140">
    <property type="entry name" value="YqgF/RNase H-like domain"/>
    <property type="match status" value="1"/>
</dbReference>
<dbReference type="HAMAP" id="MF_00651">
    <property type="entry name" value="Nuclease_YqgF"/>
    <property type="match status" value="1"/>
</dbReference>
<dbReference type="InterPro" id="IPR012337">
    <property type="entry name" value="RNaseH-like_sf"/>
</dbReference>
<dbReference type="InterPro" id="IPR005227">
    <property type="entry name" value="YqgF"/>
</dbReference>
<dbReference type="InterPro" id="IPR006641">
    <property type="entry name" value="YqgF/RNaseH-like_dom"/>
</dbReference>
<dbReference type="InterPro" id="IPR037027">
    <property type="entry name" value="YqgF/RNaseH-like_dom_sf"/>
</dbReference>
<dbReference type="NCBIfam" id="TIGR00250">
    <property type="entry name" value="RNAse_H_YqgF"/>
    <property type="match status" value="1"/>
</dbReference>
<dbReference type="PANTHER" id="PTHR33317">
    <property type="entry name" value="POLYNUCLEOTIDYL TRANSFERASE, RIBONUCLEASE H-LIKE SUPERFAMILY PROTEIN"/>
    <property type="match status" value="1"/>
</dbReference>
<dbReference type="PANTHER" id="PTHR33317:SF4">
    <property type="entry name" value="POLYNUCLEOTIDYL TRANSFERASE, RIBONUCLEASE H-LIKE SUPERFAMILY PROTEIN"/>
    <property type="match status" value="1"/>
</dbReference>
<dbReference type="Pfam" id="PF03652">
    <property type="entry name" value="RuvX"/>
    <property type="match status" value="1"/>
</dbReference>
<dbReference type="SMART" id="SM00732">
    <property type="entry name" value="YqgFc"/>
    <property type="match status" value="1"/>
</dbReference>
<dbReference type="SUPFAM" id="SSF53098">
    <property type="entry name" value="Ribonuclease H-like"/>
    <property type="match status" value="1"/>
</dbReference>
<name>YQGF_STRS7</name>
<comment type="function">
    <text evidence="1">Could be a nuclease involved in processing of the 5'-end of pre-16S rRNA.</text>
</comment>
<comment type="subcellular location">
    <subcellularLocation>
        <location evidence="1">Cytoplasm</location>
    </subcellularLocation>
</comment>
<comment type="similarity">
    <text evidence="1">Belongs to the YqgF nuclease family.</text>
</comment>
<gene>
    <name type="ordered locus">SZO_18610</name>
</gene>
<sequence length="139" mass="15736">MRIMGLDVGSKTVGVAISDPLGFTAQGLEIIKINEDKQDFGFDRLAELVKQYQVDRFVIGLPKNMNNTSGPRVEASKAYGDRIEELFHIPVSYQDERLTTVEAERMLIEQADISRGKRKKVIDKLAAQLILQNYLDCNY</sequence>